<name>Y3073_MYCTO</name>
<organism>
    <name type="scientific">Mycobacterium tuberculosis (strain CDC 1551 / Oshkosh)</name>
    <dbReference type="NCBI Taxonomy" id="83331"/>
    <lineage>
        <taxon>Bacteria</taxon>
        <taxon>Bacillati</taxon>
        <taxon>Actinomycetota</taxon>
        <taxon>Actinomycetes</taxon>
        <taxon>Mycobacteriales</taxon>
        <taxon>Mycobacteriaceae</taxon>
        <taxon>Mycobacterium</taxon>
        <taxon>Mycobacterium tuberculosis complex</taxon>
    </lineage>
</organism>
<feature type="chain" id="PRO_0000427560" description="Uncharacterized protein MT3158">
    <location>
        <begin position="1"/>
        <end position="118"/>
    </location>
</feature>
<proteinExistence type="predicted"/>
<reference key="1">
    <citation type="journal article" date="2002" name="J. Bacteriol.">
        <title>Whole-genome comparison of Mycobacterium tuberculosis clinical and laboratory strains.</title>
        <authorList>
            <person name="Fleischmann R.D."/>
            <person name="Alland D."/>
            <person name="Eisen J.A."/>
            <person name="Carpenter L."/>
            <person name="White O."/>
            <person name="Peterson J.D."/>
            <person name="DeBoy R.T."/>
            <person name="Dodson R.J."/>
            <person name="Gwinn M.L."/>
            <person name="Haft D.H."/>
            <person name="Hickey E.K."/>
            <person name="Kolonay J.F."/>
            <person name="Nelson W.C."/>
            <person name="Umayam L.A."/>
            <person name="Ermolaeva M.D."/>
            <person name="Salzberg S.L."/>
            <person name="Delcher A."/>
            <person name="Utterback T.R."/>
            <person name="Weidman J.F."/>
            <person name="Khouri H.M."/>
            <person name="Gill J."/>
            <person name="Mikula A."/>
            <person name="Bishai W."/>
            <person name="Jacobs W.R. Jr."/>
            <person name="Venter J.C."/>
            <person name="Fraser C.M."/>
        </authorList>
    </citation>
    <scope>NUCLEOTIDE SEQUENCE [LARGE SCALE GENOMIC DNA]</scope>
    <source>
        <strain>CDC 1551 / Oshkosh</strain>
    </source>
</reference>
<dbReference type="EMBL" id="AE000516">
    <property type="protein sequence ID" value="AAK47494.1"/>
    <property type="molecule type" value="Genomic_DNA"/>
</dbReference>
<dbReference type="PIR" id="B70651">
    <property type="entry name" value="B70651"/>
</dbReference>
<dbReference type="RefSeq" id="WP_003416050.1">
    <property type="nucleotide sequence ID" value="NZ_KK341227.1"/>
</dbReference>
<dbReference type="KEGG" id="mtc:MT3158"/>
<dbReference type="PATRIC" id="fig|83331.31.peg.3404"/>
<dbReference type="HOGENOM" id="CLU_137928_0_0_11"/>
<dbReference type="Proteomes" id="UP000001020">
    <property type="component" value="Chromosome"/>
</dbReference>
<dbReference type="InterPro" id="IPR052552">
    <property type="entry name" value="YeaO-like"/>
</dbReference>
<dbReference type="PANTHER" id="PTHR36849:SF1">
    <property type="entry name" value="CYTOPLASMIC PROTEIN"/>
    <property type="match status" value="1"/>
</dbReference>
<dbReference type="PANTHER" id="PTHR36849">
    <property type="entry name" value="CYTOPLASMIC PROTEIN-RELATED"/>
    <property type="match status" value="1"/>
</dbReference>
<dbReference type="Pfam" id="PF22752">
    <property type="entry name" value="DUF488-N3i"/>
    <property type="match status" value="1"/>
</dbReference>
<evidence type="ECO:0000305" key="1"/>
<protein>
    <recommendedName>
        <fullName>Uncharacterized protein MT3158</fullName>
    </recommendedName>
</protein>
<accession>P9WL10</accession>
<accession>L0TBR3</accession>
<accession>P65063</accession>
<accession>P95085</accession>
<gene>
    <name type="ordered locus">MT3158</name>
</gene>
<comment type="similarity">
    <text evidence="1">To E.coli YeaO.</text>
</comment>
<sequence length="118" mass="13751">MVRETRVRVARVYEDIDPDDGQRVLVDRIWPHGIRKDDQRVGIWCKDVAPSKELREWYHHQPERFDEFASRYQEELHDSAALAELRKLTGRSVVTPVTATRHVARSHAAVLAQLLNGR</sequence>
<keyword id="KW-1185">Reference proteome</keyword>